<reference key="1">
    <citation type="journal article" date="1999" name="Nature">
        <title>Single gene circles in dinoflagellate chloroplast genomes.</title>
        <authorList>
            <person name="Zhang Z."/>
            <person name="Green B.R."/>
            <person name="Cavalier-Smith T."/>
        </authorList>
    </citation>
    <scope>NUCLEOTIDE SEQUENCE [GENOMIC DNA]</scope>
    <source>
        <strain>CCMP449</strain>
    </source>
</reference>
<reference key="2">
    <citation type="journal article" date="1999" name="Phycol. Res.">
        <title>Molecular cloning and nucleotide sequence analysis of psbA from the dinoflagellates: origin of the dinoflagellate plastid.</title>
        <authorList>
            <person name="Takishita K."/>
            <person name="Uchida A."/>
        </authorList>
    </citation>
    <scope>NUCLEOTIDE SEQUENCE [GENOMIC DNA]</scope>
    <source>
        <strain>M-AP7</strain>
    </source>
</reference>
<organism>
    <name type="scientific">Heterocapsa triquetra</name>
    <name type="common">Dinoflagellate</name>
    <name type="synonym">Glenodinium triquetrum</name>
    <dbReference type="NCBI Taxonomy" id="66468"/>
    <lineage>
        <taxon>Eukaryota</taxon>
        <taxon>Sar</taxon>
        <taxon>Alveolata</taxon>
        <taxon>Dinophyceae</taxon>
        <taxon>Peridiniales</taxon>
        <taxon>Heterocapsaceae</taxon>
        <taxon>Heterocapsa</taxon>
    </lineage>
</organism>
<gene>
    <name evidence="1" type="primary">psbA</name>
</gene>
<evidence type="ECO:0000255" key="1">
    <source>
        <dbReference type="HAMAP-Rule" id="MF_01379"/>
    </source>
</evidence>
<comment type="function">
    <text evidence="1">Photosystem II (PSII) is a light-driven water:plastoquinone oxidoreductase that uses light energy to abstract electrons from H(2)O, generating O(2) and a proton gradient subsequently used for ATP formation. It consists of a core antenna complex that captures photons, and an electron transfer chain that converts photonic excitation into a charge separation. The D1/D2 (PsbA/PsbD) reaction center heterodimer binds P680, the primary electron donor of PSII as well as several subsequent electron acceptors.</text>
</comment>
<comment type="catalytic activity">
    <reaction evidence="1">
        <text>2 a plastoquinone + 4 hnu + 2 H2O = 2 a plastoquinol + O2</text>
        <dbReference type="Rhea" id="RHEA:36359"/>
        <dbReference type="Rhea" id="RHEA-COMP:9561"/>
        <dbReference type="Rhea" id="RHEA-COMP:9562"/>
        <dbReference type="ChEBI" id="CHEBI:15377"/>
        <dbReference type="ChEBI" id="CHEBI:15379"/>
        <dbReference type="ChEBI" id="CHEBI:17757"/>
        <dbReference type="ChEBI" id="CHEBI:30212"/>
        <dbReference type="ChEBI" id="CHEBI:62192"/>
        <dbReference type="EC" id="1.10.3.9"/>
    </reaction>
</comment>
<comment type="cofactor">
    <text evidence="1">The D1/D2 heterodimer binds P680, chlorophylls that are the primary electron donor of PSII, and subsequent electron acceptors. It shares a non-heme iron and each subunit binds pheophytin, quinone, additional chlorophylls, carotenoids and lipids. D1 provides most of the ligands for the Mn4-Ca-O5 cluster of the oxygen-evolving complex (OEC). There is also a Cl(-1) ion associated with D1 and D2, which is required for oxygen evolution. The PSII complex binds additional chlorophylls, carotenoids and specific lipids.</text>
</comment>
<comment type="subunit">
    <text evidence="1">PSII is composed of 1 copy each of membrane proteins PsbA, PsbB, PsbC, PsbD, PsbE, PsbF, PsbH, PsbI, PsbJ, PsbK, PsbL, PsbM, PsbT, PsbX, PsbY, PsbZ, Psb30/Ycf12, at least 3 peripheral proteins of the oxygen-evolving complex and a large number of cofactors. It forms dimeric complexes.</text>
</comment>
<comment type="subcellular location">
    <subcellularLocation>
        <location evidence="1">Plastid</location>
        <location evidence="1">Chloroplast thylakoid membrane</location>
        <topology evidence="1">Multi-pass membrane protein</topology>
    </subcellularLocation>
</comment>
<comment type="PTM">
    <text evidence="1">Tyr-165 forms a radical intermediate that is referred to as redox-active TyrZ, YZ or Y-Z.</text>
</comment>
<comment type="miscellaneous">
    <text evidence="1">2 of the reaction center chlorophylls (ChlD1 and ChlD2) are entirely coordinated by water.</text>
</comment>
<comment type="miscellaneous">
    <text evidence="1">Herbicides such as atrazine, BNT, diuron or ioxynil bind in the Q(B) binding site and block subsequent electron transfer.</text>
</comment>
<comment type="similarity">
    <text evidence="1">Belongs to the reaction center PufL/M/PsbA/D family.</text>
</comment>
<dbReference type="EC" id="1.10.3.9" evidence="1"/>
<dbReference type="EMBL" id="AF130033">
    <property type="protein sequence ID" value="AAD44700.1"/>
    <property type="molecule type" value="Genomic_DNA"/>
</dbReference>
<dbReference type="EMBL" id="AB025587">
    <property type="protein sequence ID" value="BAA83814.2"/>
    <property type="molecule type" value="Genomic_DNA"/>
</dbReference>
<dbReference type="SMR" id="Q9XQV1"/>
<dbReference type="GO" id="GO:0009535">
    <property type="term" value="C:chloroplast thylakoid membrane"/>
    <property type="evidence" value="ECO:0007669"/>
    <property type="project" value="UniProtKB-SubCell"/>
</dbReference>
<dbReference type="GO" id="GO:0009523">
    <property type="term" value="C:photosystem II"/>
    <property type="evidence" value="ECO:0007669"/>
    <property type="project" value="UniProtKB-KW"/>
</dbReference>
<dbReference type="GO" id="GO:0016168">
    <property type="term" value="F:chlorophyll binding"/>
    <property type="evidence" value="ECO:0007669"/>
    <property type="project" value="UniProtKB-UniRule"/>
</dbReference>
<dbReference type="GO" id="GO:0045156">
    <property type="term" value="F:electron transporter, transferring electrons within the cyclic electron transport pathway of photosynthesis activity"/>
    <property type="evidence" value="ECO:0007669"/>
    <property type="project" value="InterPro"/>
</dbReference>
<dbReference type="GO" id="GO:0005506">
    <property type="term" value="F:iron ion binding"/>
    <property type="evidence" value="ECO:0007669"/>
    <property type="project" value="UniProtKB-UniRule"/>
</dbReference>
<dbReference type="GO" id="GO:0016682">
    <property type="term" value="F:oxidoreductase activity, acting on diphenols and related substances as donors, oxygen as acceptor"/>
    <property type="evidence" value="ECO:0007669"/>
    <property type="project" value="UniProtKB-UniRule"/>
</dbReference>
<dbReference type="GO" id="GO:0009772">
    <property type="term" value="P:photosynthetic electron transport in photosystem II"/>
    <property type="evidence" value="ECO:0007669"/>
    <property type="project" value="InterPro"/>
</dbReference>
<dbReference type="GO" id="GO:0009635">
    <property type="term" value="P:response to herbicide"/>
    <property type="evidence" value="ECO:0007669"/>
    <property type="project" value="UniProtKB-KW"/>
</dbReference>
<dbReference type="Gene3D" id="1.20.85.10">
    <property type="entry name" value="Photosystem II protein D1-like"/>
    <property type="match status" value="1"/>
</dbReference>
<dbReference type="HAMAP" id="MF_01379">
    <property type="entry name" value="PSII_PsbA_D1"/>
    <property type="match status" value="1"/>
</dbReference>
<dbReference type="InterPro" id="IPR055266">
    <property type="entry name" value="D1/D2"/>
</dbReference>
<dbReference type="InterPro" id="IPR036854">
    <property type="entry name" value="Photo_II_D1/D2_sf"/>
</dbReference>
<dbReference type="InterPro" id="IPR000484">
    <property type="entry name" value="Photo_RC_L/M"/>
</dbReference>
<dbReference type="InterPro" id="IPR055265">
    <property type="entry name" value="Photo_RC_L/M_CS"/>
</dbReference>
<dbReference type="InterPro" id="IPR005867">
    <property type="entry name" value="PSII_D1"/>
</dbReference>
<dbReference type="NCBIfam" id="TIGR01151">
    <property type="entry name" value="psbA"/>
    <property type="match status" value="1"/>
</dbReference>
<dbReference type="PANTHER" id="PTHR33149:SF12">
    <property type="entry name" value="PHOTOSYSTEM II D2 PROTEIN"/>
    <property type="match status" value="1"/>
</dbReference>
<dbReference type="PANTHER" id="PTHR33149">
    <property type="entry name" value="PHOTOSYSTEM II PROTEIN D1"/>
    <property type="match status" value="1"/>
</dbReference>
<dbReference type="Pfam" id="PF00124">
    <property type="entry name" value="Photo_RC"/>
    <property type="match status" value="1"/>
</dbReference>
<dbReference type="SUPFAM" id="SSF81483">
    <property type="entry name" value="Bacterial photosystem II reaction centre, L and M subunits"/>
    <property type="match status" value="1"/>
</dbReference>
<dbReference type="PROSITE" id="PS00244">
    <property type="entry name" value="REACTION_CENTER"/>
    <property type="match status" value="1"/>
</dbReference>
<name>PSBA_HETTR</name>
<keyword id="KW-0106">Calcium</keyword>
<keyword id="KW-0148">Chlorophyll</keyword>
<keyword id="KW-0150">Chloroplast</keyword>
<keyword id="KW-0157">Chromophore</keyword>
<keyword id="KW-0249">Electron transport</keyword>
<keyword id="KW-0359">Herbicide resistance</keyword>
<keyword id="KW-0408">Iron</keyword>
<keyword id="KW-0460">Magnesium</keyword>
<keyword id="KW-0464">Manganese</keyword>
<keyword id="KW-0472">Membrane</keyword>
<keyword id="KW-0479">Metal-binding</keyword>
<keyword id="KW-0560">Oxidoreductase</keyword>
<keyword id="KW-0602">Photosynthesis</keyword>
<keyword id="KW-0604">Photosystem II</keyword>
<keyword id="KW-0934">Plastid</keyword>
<keyword id="KW-0793">Thylakoid</keyword>
<keyword id="KW-0812">Transmembrane</keyword>
<keyword id="KW-1133">Transmembrane helix</keyword>
<keyword id="KW-0813">Transport</keyword>
<sequence>MKNTFNTSNVFASAYSFWGSFIGFILSTSNRLYIGWFGILMFPLLVLATVAYIAAFIFAPPVDIDGIREPVAGALLYGNNIISGAVIPSSNAIGVHFYPVWEALGFDEWLYNGGTYQFVVLHFIFGAGAYMGREWEFSFRLGMRPWIFVAFSAPLVAASAVFIVYPIGQGSFSDGMPLGISGTFNFMLVFQAEHNILMHPFHILGVAAVFGGSLFSAMHGSLVTSSLLAETAGDLSLNIGYNFGQEDETYSISAAHGYFGRLIFQYASFNNSRSLHFFLAAWPVIGIWFTSLGVSTMAFNLNGLNFNQSIIDSSGHLINSWADIVNRADLGMEVMHERNAHNFPLDLA</sequence>
<proteinExistence type="inferred from homology"/>
<geneLocation type="chloroplast"/>
<accession>Q9XQV1</accession>
<protein>
    <recommendedName>
        <fullName evidence="1">Photosystem II protein D1</fullName>
        <shortName evidence="1">PSII D1 protein</shortName>
        <ecNumber evidence="1">1.10.3.9</ecNumber>
    </recommendedName>
    <alternativeName>
        <fullName evidence="1">Photosystem II Q(B) protein</fullName>
    </alternativeName>
</protein>
<feature type="chain" id="PRO_0000316499" description="Photosystem II protein D1" evidence="1">
    <location>
        <begin position="1"/>
        <end position="348"/>
    </location>
</feature>
<feature type="transmembrane region" description="Helical" evidence="1">
    <location>
        <begin position="33"/>
        <end position="50"/>
    </location>
</feature>
<feature type="transmembrane region" description="Helical" evidence="1">
    <location>
        <begin position="122"/>
        <end position="137"/>
    </location>
</feature>
<feature type="transmembrane region" description="Helical" evidence="1">
    <location>
        <begin position="146"/>
        <end position="160"/>
    </location>
</feature>
<feature type="transmembrane region" description="Helical" evidence="1">
    <location>
        <begin position="201"/>
        <end position="222"/>
    </location>
</feature>
<feature type="transmembrane region" description="Helical" evidence="1">
    <location>
        <begin position="278"/>
        <end position="292"/>
    </location>
</feature>
<feature type="binding site" description="axial binding residue" evidence="1">
    <location>
        <position position="122"/>
    </location>
    <ligand>
        <name>chlorophyll a</name>
        <dbReference type="ChEBI" id="CHEBI:58416"/>
        <label>ChlzD1</label>
    </ligand>
    <ligandPart>
        <name>Mg</name>
        <dbReference type="ChEBI" id="CHEBI:25107"/>
    </ligandPart>
</feature>
<feature type="binding site" evidence="1">
    <location>
        <position position="130"/>
    </location>
    <ligand>
        <name>pheophytin a</name>
        <dbReference type="ChEBI" id="CHEBI:136840"/>
        <label>D1</label>
    </ligand>
</feature>
<feature type="binding site" evidence="1">
    <location>
        <position position="174"/>
    </location>
    <ligand>
        <name>[CaMn4O5] cluster</name>
        <dbReference type="ChEBI" id="CHEBI:189552"/>
    </ligand>
</feature>
<feature type="binding site" evidence="1">
    <location>
        <position position="193"/>
    </location>
    <ligand>
        <name>[CaMn4O5] cluster</name>
        <dbReference type="ChEBI" id="CHEBI:189552"/>
    </ligand>
</feature>
<feature type="binding site" description="axial binding residue" evidence="1">
    <location>
        <position position="202"/>
    </location>
    <ligand>
        <name>chlorophyll a</name>
        <dbReference type="ChEBI" id="CHEBI:58416"/>
        <label>PD1</label>
    </ligand>
    <ligandPart>
        <name>Mg</name>
        <dbReference type="ChEBI" id="CHEBI:25107"/>
    </ligandPart>
</feature>
<feature type="binding site" evidence="1">
    <location>
        <position position="219"/>
    </location>
    <ligand>
        <name>a quinone</name>
        <dbReference type="ChEBI" id="CHEBI:132124"/>
        <label>B</label>
    </ligand>
</feature>
<feature type="binding site" evidence="1">
    <location>
        <position position="219"/>
    </location>
    <ligand>
        <name>Fe cation</name>
        <dbReference type="ChEBI" id="CHEBI:24875"/>
        <note>ligand shared with heterodimeric partner</note>
    </ligand>
</feature>
<feature type="binding site" evidence="1">
    <location>
        <begin position="268"/>
        <end position="269"/>
    </location>
    <ligand>
        <name>a quinone</name>
        <dbReference type="ChEBI" id="CHEBI:132124"/>
        <label>B</label>
    </ligand>
</feature>
<feature type="binding site" evidence="1">
    <location>
        <position position="276"/>
    </location>
    <ligand>
        <name>Fe cation</name>
        <dbReference type="ChEBI" id="CHEBI:24875"/>
        <note>ligand shared with heterodimeric partner</note>
    </ligand>
</feature>
<feature type="binding site" evidence="1">
    <location>
        <position position="336"/>
    </location>
    <ligand>
        <name>[CaMn4O5] cluster</name>
        <dbReference type="ChEBI" id="CHEBI:189552"/>
    </ligand>
</feature>
<feature type="binding site" evidence="1">
    <location>
        <position position="337"/>
    </location>
    <ligand>
        <name>[CaMn4O5] cluster</name>
        <dbReference type="ChEBI" id="CHEBI:189552"/>
    </ligand>
</feature>
<feature type="binding site" evidence="1">
    <location>
        <position position="346"/>
    </location>
    <ligand>
        <name>[CaMn4O5] cluster</name>
        <dbReference type="ChEBI" id="CHEBI:189552"/>
    </ligand>
</feature>
<feature type="binding site" evidence="1">
    <location>
        <position position="348"/>
    </location>
    <ligand>
        <name>[CaMn4O5] cluster</name>
        <dbReference type="ChEBI" id="CHEBI:189552"/>
    </ligand>
</feature>
<feature type="site" description="Tyrosine radical intermediate" evidence="1">
    <location>
        <position position="165"/>
    </location>
</feature>
<feature type="site" description="Stabilizes free radical intermediate" evidence="1">
    <location>
        <position position="194"/>
    </location>
</feature>